<feature type="chain" id="PRO_0000188598" description="Glycogen synthase">
    <location>
        <begin position="1"/>
        <end position="510"/>
    </location>
</feature>
<feature type="binding site" evidence="1">
    <location>
        <position position="18"/>
    </location>
    <ligand>
        <name>ADP-alpha-D-glucose</name>
        <dbReference type="ChEBI" id="CHEBI:57498"/>
    </ligand>
</feature>
<protein>
    <recommendedName>
        <fullName evidence="1">Glycogen synthase</fullName>
        <ecNumber evidence="1">2.4.1.21</ecNumber>
    </recommendedName>
    <alternativeName>
        <fullName evidence="1">Starch [bacterial glycogen] synthase</fullName>
    </alternativeName>
</protein>
<gene>
    <name evidence="1" type="primary">glgA</name>
    <name type="ordered locus">BB2861</name>
</gene>
<sequence>MTTIRTLVVAAEAFPLAKTGGLGDAVAGMVQALGHRPGGVDVQCELLMPAYRGTLDRLYRPRTVARLGGLPGGPASLVRGHCPGSGLSVLLLRNDALYDRPGIYVDDSGQGYPDNARRYAALAHAAARLAQGLPGLRPPHVVHAHDWHAALAPLLIHAAGLHYVKTLLTIHNLAFQGTFPAELASALGIPLACRHDDGALSDDRVNFLKAGIRYATRVTTVSRAYAREILTPAFGCGLHGLLRARGADLSPVPNGIDTALWNPAADPHLGGLRFDALDMRNKACCKAALQAELGLQLRADATVLAMGSRLTGQKMADVAIAALPALLEAHEHLQFALIGRGEPDLEAALRALAARYPGRCAVHIGYDEPLAHRLHAGADLLLHGSRFEPFGLTPLYAMRYGTLPVASRVGGMVDTIRDPGPAIEESCAGQGTGFLFDGSEPADMRQAVTRALRALAKPAVRDAMRRNAMQADFSWRTSAQAYAGLYANLASGPQRGRVPAPTLPLLANAA</sequence>
<evidence type="ECO:0000255" key="1">
    <source>
        <dbReference type="HAMAP-Rule" id="MF_00484"/>
    </source>
</evidence>
<proteinExistence type="inferred from homology"/>
<name>GLGA_BORBR</name>
<keyword id="KW-0320">Glycogen biosynthesis</keyword>
<keyword id="KW-0328">Glycosyltransferase</keyword>
<keyword id="KW-0808">Transferase</keyword>
<comment type="function">
    <text evidence="1">Synthesizes alpha-1,4-glucan chains using ADP-glucose.</text>
</comment>
<comment type="catalytic activity">
    <reaction evidence="1">
        <text>[(1-&gt;4)-alpha-D-glucosyl](n) + ADP-alpha-D-glucose = [(1-&gt;4)-alpha-D-glucosyl](n+1) + ADP + H(+)</text>
        <dbReference type="Rhea" id="RHEA:18189"/>
        <dbReference type="Rhea" id="RHEA-COMP:9584"/>
        <dbReference type="Rhea" id="RHEA-COMP:9587"/>
        <dbReference type="ChEBI" id="CHEBI:15378"/>
        <dbReference type="ChEBI" id="CHEBI:15444"/>
        <dbReference type="ChEBI" id="CHEBI:57498"/>
        <dbReference type="ChEBI" id="CHEBI:456216"/>
        <dbReference type="EC" id="2.4.1.21"/>
    </reaction>
</comment>
<comment type="pathway">
    <text evidence="1">Glycan biosynthesis; glycogen biosynthesis.</text>
</comment>
<comment type="similarity">
    <text evidence="1">Belongs to the glycosyltransferase 1 family. Bacterial/plant glycogen synthase subfamily.</text>
</comment>
<accession>Q7WIJ0</accession>
<reference key="1">
    <citation type="journal article" date="2003" name="Nat. Genet.">
        <title>Comparative analysis of the genome sequences of Bordetella pertussis, Bordetella parapertussis and Bordetella bronchiseptica.</title>
        <authorList>
            <person name="Parkhill J."/>
            <person name="Sebaihia M."/>
            <person name="Preston A."/>
            <person name="Murphy L.D."/>
            <person name="Thomson N.R."/>
            <person name="Harris D.E."/>
            <person name="Holden M.T.G."/>
            <person name="Churcher C.M."/>
            <person name="Bentley S.D."/>
            <person name="Mungall K.L."/>
            <person name="Cerdeno-Tarraga A.-M."/>
            <person name="Temple L."/>
            <person name="James K.D."/>
            <person name="Harris B."/>
            <person name="Quail M.A."/>
            <person name="Achtman M."/>
            <person name="Atkin R."/>
            <person name="Baker S."/>
            <person name="Basham D."/>
            <person name="Bason N."/>
            <person name="Cherevach I."/>
            <person name="Chillingworth T."/>
            <person name="Collins M."/>
            <person name="Cronin A."/>
            <person name="Davis P."/>
            <person name="Doggett J."/>
            <person name="Feltwell T."/>
            <person name="Goble A."/>
            <person name="Hamlin N."/>
            <person name="Hauser H."/>
            <person name="Holroyd S."/>
            <person name="Jagels K."/>
            <person name="Leather S."/>
            <person name="Moule S."/>
            <person name="Norberczak H."/>
            <person name="O'Neil S."/>
            <person name="Ormond D."/>
            <person name="Price C."/>
            <person name="Rabbinowitsch E."/>
            <person name="Rutter S."/>
            <person name="Sanders M."/>
            <person name="Saunders D."/>
            <person name="Seeger K."/>
            <person name="Sharp S."/>
            <person name="Simmonds M."/>
            <person name="Skelton J."/>
            <person name="Squares R."/>
            <person name="Squares S."/>
            <person name="Stevens K."/>
            <person name="Unwin L."/>
            <person name="Whitehead S."/>
            <person name="Barrell B.G."/>
            <person name="Maskell D.J."/>
        </authorList>
    </citation>
    <scope>NUCLEOTIDE SEQUENCE [LARGE SCALE GENOMIC DNA]</scope>
    <source>
        <strain>ATCC BAA-588 / NCTC 13252 / RB50</strain>
    </source>
</reference>
<organism>
    <name type="scientific">Bordetella bronchiseptica (strain ATCC BAA-588 / NCTC 13252 / RB50)</name>
    <name type="common">Alcaligenes bronchisepticus</name>
    <dbReference type="NCBI Taxonomy" id="257310"/>
    <lineage>
        <taxon>Bacteria</taxon>
        <taxon>Pseudomonadati</taxon>
        <taxon>Pseudomonadota</taxon>
        <taxon>Betaproteobacteria</taxon>
        <taxon>Burkholderiales</taxon>
        <taxon>Alcaligenaceae</taxon>
        <taxon>Bordetella</taxon>
    </lineage>
</organism>
<dbReference type="EC" id="2.4.1.21" evidence="1"/>
<dbReference type="EMBL" id="BX640445">
    <property type="protein sequence ID" value="CAE33353.1"/>
    <property type="molecule type" value="Genomic_DNA"/>
</dbReference>
<dbReference type="RefSeq" id="WP_003811335.1">
    <property type="nucleotide sequence ID" value="NC_002927.3"/>
</dbReference>
<dbReference type="SMR" id="Q7WIJ0"/>
<dbReference type="CAZy" id="GT5">
    <property type="family name" value="Glycosyltransferase Family 5"/>
</dbReference>
<dbReference type="KEGG" id="bbr:BB2861"/>
<dbReference type="eggNOG" id="COG0297">
    <property type="taxonomic scope" value="Bacteria"/>
</dbReference>
<dbReference type="HOGENOM" id="CLU_009583_18_4_4"/>
<dbReference type="UniPathway" id="UPA00164"/>
<dbReference type="Proteomes" id="UP000001027">
    <property type="component" value="Chromosome"/>
</dbReference>
<dbReference type="GO" id="GO:0009011">
    <property type="term" value="F:alpha-1,4-glucan glucosyltransferase (ADP-glucose donor) activity"/>
    <property type="evidence" value="ECO:0007669"/>
    <property type="project" value="UniProtKB-UniRule"/>
</dbReference>
<dbReference type="GO" id="GO:0004373">
    <property type="term" value="F:alpha-1,4-glucan glucosyltransferase (UDP-glucose donor) activity"/>
    <property type="evidence" value="ECO:0007669"/>
    <property type="project" value="InterPro"/>
</dbReference>
<dbReference type="GO" id="GO:0005978">
    <property type="term" value="P:glycogen biosynthetic process"/>
    <property type="evidence" value="ECO:0007669"/>
    <property type="project" value="UniProtKB-UniRule"/>
</dbReference>
<dbReference type="CDD" id="cd03791">
    <property type="entry name" value="GT5_Glycogen_synthase_DULL1-like"/>
    <property type="match status" value="1"/>
</dbReference>
<dbReference type="Gene3D" id="3.40.50.2000">
    <property type="entry name" value="Glycogen Phosphorylase B"/>
    <property type="match status" value="2"/>
</dbReference>
<dbReference type="HAMAP" id="MF_00484">
    <property type="entry name" value="Glycogen_synth"/>
    <property type="match status" value="1"/>
</dbReference>
<dbReference type="InterPro" id="IPR001296">
    <property type="entry name" value="Glyco_trans_1"/>
</dbReference>
<dbReference type="InterPro" id="IPR011835">
    <property type="entry name" value="GS/SS"/>
</dbReference>
<dbReference type="InterPro" id="IPR013534">
    <property type="entry name" value="Starch_synth_cat_dom"/>
</dbReference>
<dbReference type="NCBIfam" id="TIGR02095">
    <property type="entry name" value="glgA"/>
    <property type="match status" value="1"/>
</dbReference>
<dbReference type="NCBIfam" id="NF001899">
    <property type="entry name" value="PRK00654.1-2"/>
    <property type="match status" value="1"/>
</dbReference>
<dbReference type="PANTHER" id="PTHR45825:SF11">
    <property type="entry name" value="ALPHA AMYLASE DOMAIN-CONTAINING PROTEIN"/>
    <property type="match status" value="1"/>
</dbReference>
<dbReference type="PANTHER" id="PTHR45825">
    <property type="entry name" value="GRANULE-BOUND STARCH SYNTHASE 1, CHLOROPLASTIC/AMYLOPLASTIC"/>
    <property type="match status" value="1"/>
</dbReference>
<dbReference type="Pfam" id="PF08323">
    <property type="entry name" value="Glyco_transf_5"/>
    <property type="match status" value="1"/>
</dbReference>
<dbReference type="Pfam" id="PF00534">
    <property type="entry name" value="Glycos_transf_1"/>
    <property type="match status" value="1"/>
</dbReference>
<dbReference type="SUPFAM" id="SSF53756">
    <property type="entry name" value="UDP-Glycosyltransferase/glycogen phosphorylase"/>
    <property type="match status" value="1"/>
</dbReference>